<sequence length="435" mass="47356">MSIITDVYAREVLDSRGNPTLEVEVYTESGAFGRGMVPSGASTGEHEAVELRDGDKSRYLGLGTQKAVDNVNNIIAEAIIGYDVRDQQAIDRAMIALDGTPNKGKLGANAILGVSIAVARAAADYLEVPLYTYLGGFNTKVLPTPMMNIINGGSHSDAPIAFQEFMIMPVGAPTFKEGLRWGAEVFHALKKILKERGLVTAVGDEGGFAPKFEGTEDGVETILKAIEAAGYEAGENGIMIGFDCASSEFYDKERKVYDYTKFEGEGAAVRTSAEQVDYLEELVNKYPIITIEDGMDENDWDGWKVLTERLGKRVQLVGDDFFVTNTEYLARGIKENAANSILIKVNQIGTLTETFEAIEMAKEAGYTAVVSHRSGETEDSTIADIAVATNAGQIKTGSLSRTDRIAKYNQLLRIEDQLGEVAQYKGIKSFYNLKK</sequence>
<feature type="chain" id="PRO_1000019253" description="Enolase">
    <location>
        <begin position="1"/>
        <end position="435"/>
    </location>
</feature>
<feature type="active site" description="Proton donor" evidence="1">
    <location>
        <position position="205"/>
    </location>
</feature>
<feature type="active site" description="Proton acceptor" evidence="1">
    <location>
        <position position="344"/>
    </location>
</feature>
<feature type="binding site" evidence="1">
    <location>
        <position position="163"/>
    </location>
    <ligand>
        <name>(2R)-2-phosphoglycerate</name>
        <dbReference type="ChEBI" id="CHEBI:58289"/>
    </ligand>
</feature>
<feature type="binding site" evidence="1">
    <location>
        <position position="243"/>
    </location>
    <ligand>
        <name>Mg(2+)</name>
        <dbReference type="ChEBI" id="CHEBI:18420"/>
    </ligand>
</feature>
<feature type="binding site" evidence="1">
    <location>
        <position position="292"/>
    </location>
    <ligand>
        <name>Mg(2+)</name>
        <dbReference type="ChEBI" id="CHEBI:18420"/>
    </ligand>
</feature>
<feature type="binding site" evidence="1">
    <location>
        <position position="319"/>
    </location>
    <ligand>
        <name>Mg(2+)</name>
        <dbReference type="ChEBI" id="CHEBI:18420"/>
    </ligand>
</feature>
<feature type="binding site" evidence="1">
    <location>
        <position position="344"/>
    </location>
    <ligand>
        <name>(2R)-2-phosphoglycerate</name>
        <dbReference type="ChEBI" id="CHEBI:58289"/>
    </ligand>
</feature>
<feature type="binding site" evidence="1">
    <location>
        <position position="373"/>
    </location>
    <ligand>
        <name>(2R)-2-phosphoglycerate</name>
        <dbReference type="ChEBI" id="CHEBI:58289"/>
    </ligand>
</feature>
<feature type="binding site" evidence="1">
    <location>
        <position position="374"/>
    </location>
    <ligand>
        <name>(2R)-2-phosphoglycerate</name>
        <dbReference type="ChEBI" id="CHEBI:58289"/>
    </ligand>
</feature>
<feature type="binding site" evidence="1">
    <location>
        <position position="395"/>
    </location>
    <ligand>
        <name>(2R)-2-phosphoglycerate</name>
        <dbReference type="ChEBI" id="CHEBI:58289"/>
    </ligand>
</feature>
<evidence type="ECO:0000255" key="1">
    <source>
        <dbReference type="HAMAP-Rule" id="MF_00318"/>
    </source>
</evidence>
<comment type="function">
    <text evidence="1">Catalyzes the reversible conversion of 2-phosphoglycerate (2-PG) into phosphoenolpyruvate (PEP). It is essential for the degradation of carbohydrates via glycolysis.</text>
</comment>
<comment type="catalytic activity">
    <reaction evidence="1">
        <text>(2R)-2-phosphoglycerate = phosphoenolpyruvate + H2O</text>
        <dbReference type="Rhea" id="RHEA:10164"/>
        <dbReference type="ChEBI" id="CHEBI:15377"/>
        <dbReference type="ChEBI" id="CHEBI:58289"/>
        <dbReference type="ChEBI" id="CHEBI:58702"/>
        <dbReference type="EC" id="4.2.1.11"/>
    </reaction>
</comment>
<comment type="cofactor">
    <cofactor evidence="1">
        <name>Mg(2+)</name>
        <dbReference type="ChEBI" id="CHEBI:18420"/>
    </cofactor>
    <text evidence="1">Binds a second Mg(2+) ion via substrate during catalysis.</text>
</comment>
<comment type="pathway">
    <text evidence="1">Carbohydrate degradation; glycolysis; pyruvate from D-glyceraldehyde 3-phosphate: step 4/5.</text>
</comment>
<comment type="subcellular location">
    <subcellularLocation>
        <location evidence="1">Cytoplasm</location>
    </subcellularLocation>
    <subcellularLocation>
        <location evidence="1">Secreted</location>
    </subcellularLocation>
    <subcellularLocation>
        <location evidence="1">Cell surface</location>
    </subcellularLocation>
    <text evidence="1">Fractions of enolase are present in both the cytoplasm and on the cell surface.</text>
</comment>
<comment type="similarity">
    <text evidence="1">Belongs to the enolase family.</text>
</comment>
<keyword id="KW-0963">Cytoplasm</keyword>
<keyword id="KW-0324">Glycolysis</keyword>
<keyword id="KW-0456">Lyase</keyword>
<keyword id="KW-0460">Magnesium</keyword>
<keyword id="KW-0479">Metal-binding</keyword>
<keyword id="KW-0964">Secreted</keyword>
<protein>
    <recommendedName>
        <fullName evidence="1">Enolase</fullName>
        <ecNumber evidence="1">4.2.1.11</ecNumber>
    </recommendedName>
    <alternativeName>
        <fullName evidence="1">2-phospho-D-glycerate hydro-lyase</fullName>
    </alternativeName>
    <alternativeName>
        <fullName evidence="1">2-phosphoglycerate dehydratase</fullName>
    </alternativeName>
</protein>
<accession>A2RFE3</accession>
<reference key="1">
    <citation type="journal article" date="2007" name="J. Bacteriol.">
        <title>Complete genome of acute rheumatic fever-associated serotype M5 Streptococcus pyogenes strain Manfredo.</title>
        <authorList>
            <person name="Holden M.T.G."/>
            <person name="Scott A."/>
            <person name="Cherevach I."/>
            <person name="Chillingworth T."/>
            <person name="Churcher C."/>
            <person name="Cronin A."/>
            <person name="Dowd L."/>
            <person name="Feltwell T."/>
            <person name="Hamlin N."/>
            <person name="Holroyd S."/>
            <person name="Jagels K."/>
            <person name="Moule S."/>
            <person name="Mungall K."/>
            <person name="Quail M.A."/>
            <person name="Price C."/>
            <person name="Rabbinowitsch E."/>
            <person name="Sharp S."/>
            <person name="Skelton J."/>
            <person name="Whitehead S."/>
            <person name="Barrell B.G."/>
            <person name="Kehoe M."/>
            <person name="Parkhill J."/>
        </authorList>
    </citation>
    <scope>NUCLEOTIDE SEQUENCE [LARGE SCALE GENOMIC DNA]</scope>
    <source>
        <strain>Manfredo</strain>
    </source>
</reference>
<proteinExistence type="inferred from homology"/>
<organism>
    <name type="scientific">Streptococcus pyogenes serotype M5 (strain Manfredo)</name>
    <dbReference type="NCBI Taxonomy" id="160491"/>
    <lineage>
        <taxon>Bacteria</taxon>
        <taxon>Bacillati</taxon>
        <taxon>Bacillota</taxon>
        <taxon>Bacilli</taxon>
        <taxon>Lactobacillales</taxon>
        <taxon>Streptococcaceae</taxon>
        <taxon>Streptococcus</taxon>
    </lineage>
</organism>
<dbReference type="EC" id="4.2.1.11" evidence="1"/>
<dbReference type="EMBL" id="AM295007">
    <property type="protein sequence ID" value="CAM30572.1"/>
    <property type="molecule type" value="Genomic_DNA"/>
</dbReference>
<dbReference type="RefSeq" id="WP_002985288.1">
    <property type="nucleotide sequence ID" value="NC_009332.1"/>
</dbReference>
<dbReference type="SMR" id="A2RFE3"/>
<dbReference type="GeneID" id="69901134"/>
<dbReference type="KEGG" id="spf:SpyM51248"/>
<dbReference type="HOGENOM" id="CLU_031223_2_1_9"/>
<dbReference type="UniPathway" id="UPA00109">
    <property type="reaction ID" value="UER00187"/>
</dbReference>
<dbReference type="GO" id="GO:0009986">
    <property type="term" value="C:cell surface"/>
    <property type="evidence" value="ECO:0007669"/>
    <property type="project" value="UniProtKB-SubCell"/>
</dbReference>
<dbReference type="GO" id="GO:0005576">
    <property type="term" value="C:extracellular region"/>
    <property type="evidence" value="ECO:0007669"/>
    <property type="project" value="UniProtKB-SubCell"/>
</dbReference>
<dbReference type="GO" id="GO:0009274">
    <property type="term" value="C:peptidoglycan-based cell wall"/>
    <property type="evidence" value="ECO:0007669"/>
    <property type="project" value="UniProtKB-ARBA"/>
</dbReference>
<dbReference type="GO" id="GO:0000015">
    <property type="term" value="C:phosphopyruvate hydratase complex"/>
    <property type="evidence" value="ECO:0007669"/>
    <property type="project" value="InterPro"/>
</dbReference>
<dbReference type="GO" id="GO:0000287">
    <property type="term" value="F:magnesium ion binding"/>
    <property type="evidence" value="ECO:0007669"/>
    <property type="project" value="UniProtKB-UniRule"/>
</dbReference>
<dbReference type="GO" id="GO:0004634">
    <property type="term" value="F:phosphopyruvate hydratase activity"/>
    <property type="evidence" value="ECO:0007669"/>
    <property type="project" value="UniProtKB-UniRule"/>
</dbReference>
<dbReference type="GO" id="GO:0006096">
    <property type="term" value="P:glycolytic process"/>
    <property type="evidence" value="ECO:0007669"/>
    <property type="project" value="UniProtKB-UniRule"/>
</dbReference>
<dbReference type="CDD" id="cd03313">
    <property type="entry name" value="enolase"/>
    <property type="match status" value="1"/>
</dbReference>
<dbReference type="FunFam" id="3.20.20.120:FF:000001">
    <property type="entry name" value="Enolase"/>
    <property type="match status" value="1"/>
</dbReference>
<dbReference type="FunFam" id="3.30.390.10:FF:000001">
    <property type="entry name" value="Enolase"/>
    <property type="match status" value="1"/>
</dbReference>
<dbReference type="Gene3D" id="3.20.20.120">
    <property type="entry name" value="Enolase-like C-terminal domain"/>
    <property type="match status" value="1"/>
</dbReference>
<dbReference type="Gene3D" id="3.30.390.10">
    <property type="entry name" value="Enolase-like, N-terminal domain"/>
    <property type="match status" value="1"/>
</dbReference>
<dbReference type="HAMAP" id="MF_00318">
    <property type="entry name" value="Enolase"/>
    <property type="match status" value="1"/>
</dbReference>
<dbReference type="InterPro" id="IPR000941">
    <property type="entry name" value="Enolase"/>
</dbReference>
<dbReference type="InterPro" id="IPR036849">
    <property type="entry name" value="Enolase-like_C_sf"/>
</dbReference>
<dbReference type="InterPro" id="IPR029017">
    <property type="entry name" value="Enolase-like_N"/>
</dbReference>
<dbReference type="InterPro" id="IPR020810">
    <property type="entry name" value="Enolase_C"/>
</dbReference>
<dbReference type="InterPro" id="IPR020809">
    <property type="entry name" value="Enolase_CS"/>
</dbReference>
<dbReference type="InterPro" id="IPR020811">
    <property type="entry name" value="Enolase_N"/>
</dbReference>
<dbReference type="NCBIfam" id="TIGR01060">
    <property type="entry name" value="eno"/>
    <property type="match status" value="1"/>
</dbReference>
<dbReference type="PANTHER" id="PTHR11902">
    <property type="entry name" value="ENOLASE"/>
    <property type="match status" value="1"/>
</dbReference>
<dbReference type="PANTHER" id="PTHR11902:SF1">
    <property type="entry name" value="ENOLASE"/>
    <property type="match status" value="1"/>
</dbReference>
<dbReference type="Pfam" id="PF00113">
    <property type="entry name" value="Enolase_C"/>
    <property type="match status" value="1"/>
</dbReference>
<dbReference type="Pfam" id="PF03952">
    <property type="entry name" value="Enolase_N"/>
    <property type="match status" value="1"/>
</dbReference>
<dbReference type="PIRSF" id="PIRSF001400">
    <property type="entry name" value="Enolase"/>
    <property type="match status" value="1"/>
</dbReference>
<dbReference type="PRINTS" id="PR00148">
    <property type="entry name" value="ENOLASE"/>
</dbReference>
<dbReference type="SFLD" id="SFLDS00001">
    <property type="entry name" value="Enolase"/>
    <property type="match status" value="1"/>
</dbReference>
<dbReference type="SFLD" id="SFLDF00002">
    <property type="entry name" value="enolase"/>
    <property type="match status" value="1"/>
</dbReference>
<dbReference type="SMART" id="SM01192">
    <property type="entry name" value="Enolase_C"/>
    <property type="match status" value="1"/>
</dbReference>
<dbReference type="SMART" id="SM01193">
    <property type="entry name" value="Enolase_N"/>
    <property type="match status" value="1"/>
</dbReference>
<dbReference type="SUPFAM" id="SSF51604">
    <property type="entry name" value="Enolase C-terminal domain-like"/>
    <property type="match status" value="1"/>
</dbReference>
<dbReference type="SUPFAM" id="SSF54826">
    <property type="entry name" value="Enolase N-terminal domain-like"/>
    <property type="match status" value="1"/>
</dbReference>
<dbReference type="PROSITE" id="PS00164">
    <property type="entry name" value="ENOLASE"/>
    <property type="match status" value="1"/>
</dbReference>
<gene>
    <name evidence="1" type="primary">eno</name>
    <name type="ordered locus">SpyM51248</name>
</gene>
<name>ENO_STRPG</name>